<dbReference type="EC" id="3.6.1.41" evidence="1"/>
<dbReference type="EMBL" id="CP000744">
    <property type="protein sequence ID" value="ABR86135.1"/>
    <property type="molecule type" value="Genomic_DNA"/>
</dbReference>
<dbReference type="RefSeq" id="WP_012074174.1">
    <property type="nucleotide sequence ID" value="NC_009656.1"/>
</dbReference>
<dbReference type="SMR" id="A6UZ94"/>
<dbReference type="GeneID" id="77219110"/>
<dbReference type="KEGG" id="pap:PSPA7_0734"/>
<dbReference type="HOGENOM" id="CLU_056184_2_0_6"/>
<dbReference type="Proteomes" id="UP000001582">
    <property type="component" value="Chromosome"/>
</dbReference>
<dbReference type="GO" id="GO:0008803">
    <property type="term" value="F:bis(5'-nucleosyl)-tetraphosphatase (symmetrical) activity"/>
    <property type="evidence" value="ECO:0007669"/>
    <property type="project" value="UniProtKB-UniRule"/>
</dbReference>
<dbReference type="CDD" id="cd07422">
    <property type="entry name" value="MPP_ApaH"/>
    <property type="match status" value="1"/>
</dbReference>
<dbReference type="Gene3D" id="3.60.21.10">
    <property type="match status" value="1"/>
</dbReference>
<dbReference type="HAMAP" id="MF_00199">
    <property type="entry name" value="ApaH"/>
    <property type="match status" value="1"/>
</dbReference>
<dbReference type="InterPro" id="IPR004617">
    <property type="entry name" value="ApaH"/>
</dbReference>
<dbReference type="InterPro" id="IPR004843">
    <property type="entry name" value="Calcineurin-like_PHP_ApaH"/>
</dbReference>
<dbReference type="InterPro" id="IPR029052">
    <property type="entry name" value="Metallo-depent_PP-like"/>
</dbReference>
<dbReference type="NCBIfam" id="TIGR00668">
    <property type="entry name" value="apaH"/>
    <property type="match status" value="1"/>
</dbReference>
<dbReference type="NCBIfam" id="NF001204">
    <property type="entry name" value="PRK00166.1"/>
    <property type="match status" value="1"/>
</dbReference>
<dbReference type="PANTHER" id="PTHR40942">
    <property type="match status" value="1"/>
</dbReference>
<dbReference type="PANTHER" id="PTHR40942:SF4">
    <property type="entry name" value="CYTOCHROME C5"/>
    <property type="match status" value="1"/>
</dbReference>
<dbReference type="Pfam" id="PF00149">
    <property type="entry name" value="Metallophos"/>
    <property type="match status" value="1"/>
</dbReference>
<dbReference type="PIRSF" id="PIRSF000903">
    <property type="entry name" value="B5n-ttraPtase_sm"/>
    <property type="match status" value="1"/>
</dbReference>
<dbReference type="SUPFAM" id="SSF56300">
    <property type="entry name" value="Metallo-dependent phosphatases"/>
    <property type="match status" value="1"/>
</dbReference>
<evidence type="ECO:0000255" key="1">
    <source>
        <dbReference type="HAMAP-Rule" id="MF_00199"/>
    </source>
</evidence>
<feature type="chain" id="PRO_1000012075" description="Bis(5'-nucleosyl)-tetraphosphatase, symmetrical">
    <location>
        <begin position="1"/>
        <end position="283"/>
    </location>
</feature>
<gene>
    <name evidence="1" type="primary">apaH</name>
    <name type="ordered locus">PSPA7_0734</name>
</gene>
<reference key="1">
    <citation type="submission" date="2007-06" db="EMBL/GenBank/DDBJ databases">
        <authorList>
            <person name="Dodson R.J."/>
            <person name="Harkins D."/>
            <person name="Paulsen I.T."/>
        </authorList>
    </citation>
    <scope>NUCLEOTIDE SEQUENCE [LARGE SCALE GENOMIC DNA]</scope>
    <source>
        <strain>DSM 24068 / PA7</strain>
    </source>
</reference>
<accession>A6UZ94</accession>
<comment type="function">
    <text evidence="1">Hydrolyzes diadenosine 5',5'''-P1,P4-tetraphosphate to yield ADP.</text>
</comment>
<comment type="catalytic activity">
    <reaction evidence="1">
        <text>P(1),P(4)-bis(5'-adenosyl) tetraphosphate + H2O = 2 ADP + 2 H(+)</text>
        <dbReference type="Rhea" id="RHEA:24252"/>
        <dbReference type="ChEBI" id="CHEBI:15377"/>
        <dbReference type="ChEBI" id="CHEBI:15378"/>
        <dbReference type="ChEBI" id="CHEBI:58141"/>
        <dbReference type="ChEBI" id="CHEBI:456216"/>
        <dbReference type="EC" id="3.6.1.41"/>
    </reaction>
</comment>
<comment type="similarity">
    <text evidence="1">Belongs to the Ap4A hydrolase family.</text>
</comment>
<protein>
    <recommendedName>
        <fullName evidence="1">Bis(5'-nucleosyl)-tetraphosphatase, symmetrical</fullName>
        <ecNumber evidence="1">3.6.1.41</ecNumber>
    </recommendedName>
    <alternativeName>
        <fullName evidence="1">Ap4A hydrolase</fullName>
    </alternativeName>
    <alternativeName>
        <fullName evidence="1">Diadenosine 5',5'''-P1,P4-tetraphosphate pyrophosphohydrolase</fullName>
    </alternativeName>
    <alternativeName>
        <fullName evidence="1">Diadenosine tetraphosphatase</fullName>
    </alternativeName>
</protein>
<proteinExistence type="inferred from homology"/>
<name>APAH_PSEP7</name>
<organism>
    <name type="scientific">Pseudomonas paraeruginosa (strain DSM 24068 / PA7)</name>
    <name type="common">Pseudomonas aeruginosa (strain PA7)</name>
    <dbReference type="NCBI Taxonomy" id="381754"/>
    <lineage>
        <taxon>Bacteria</taxon>
        <taxon>Pseudomonadati</taxon>
        <taxon>Pseudomonadota</taxon>
        <taxon>Gammaproteobacteria</taxon>
        <taxon>Pseudomonadales</taxon>
        <taxon>Pseudomonadaceae</taxon>
        <taxon>Pseudomonas</taxon>
        <taxon>Pseudomonas paraeruginosa</taxon>
    </lineage>
</organism>
<keyword id="KW-0378">Hydrolase</keyword>
<sequence>MTVYAVGDLQGCLEPLKCLLERVAFDPAKDRLWLVGDLVNRGPQSLETLRFLYAMREAVVSVLGNHDLHLLAVAHRSERLKKSDTLREILEAPDREALLDWLRRLPLLHYDEQRQVTLVHAGIPPQWSLEKARLRAAEVEEALRDDQRLPLFLEGMYGNEPAKWDKKLHGIERLRVITNYFTRMRFCTEDGRLDLKSKEGLDTAPPGYAPWFSFASRKTRGEKIIFGHWAALEGQCDEPGLFALDTGCVWGAKMTLLNVDSGERLSCDCAGQQASAKPAGPPA</sequence>